<keyword id="KW-0025">Alternative splicing</keyword>
<keyword id="KW-0130">Cell adhesion</keyword>
<keyword id="KW-1003">Cell membrane</keyword>
<keyword id="KW-0966">Cell projection</keyword>
<keyword id="KW-0145">Chemotaxis</keyword>
<keyword id="KW-0175">Coiled coil</keyword>
<keyword id="KW-0963">Cytoplasm</keyword>
<keyword id="KW-0206">Cytoskeleton</keyword>
<keyword id="KW-0209">Deafness</keyword>
<keyword id="KW-0217">Developmental protein</keyword>
<keyword id="KW-0221">Differentiation</keyword>
<keyword id="KW-0225">Disease variant</keyword>
<keyword id="KW-1009">Hearing</keyword>
<keyword id="KW-0472">Membrane</keyword>
<keyword id="KW-0517">Myogenesis</keyword>
<keyword id="KW-1010">Non-syndromic deafness</keyword>
<keyword id="KW-0597">Phosphoprotein</keyword>
<keyword id="KW-1267">Proteomics identification</keyword>
<keyword id="KW-1185">Reference proteome</keyword>
<keyword id="KW-0734">Signal transduction inhibitor</keyword>
<evidence type="ECO:0000250" key="1">
    <source>
        <dbReference type="UniProtKB" id="Q7TP54"/>
    </source>
</evidence>
<evidence type="ECO:0000250" key="2">
    <source>
        <dbReference type="UniProtKB" id="Q80U16"/>
    </source>
</evidence>
<evidence type="ECO:0000255" key="3"/>
<evidence type="ECO:0000256" key="4">
    <source>
        <dbReference type="SAM" id="MobiDB-lite"/>
    </source>
</evidence>
<evidence type="ECO:0000269" key="5">
    <source>
    </source>
</evidence>
<evidence type="ECO:0000269" key="6">
    <source>
    </source>
</evidence>
<evidence type="ECO:0000269" key="7">
    <source>
    </source>
</evidence>
<evidence type="ECO:0000269" key="8">
    <source>
    </source>
</evidence>
<evidence type="ECO:0000269" key="9">
    <source>
    </source>
</evidence>
<evidence type="ECO:0000269" key="10">
    <source>
    </source>
</evidence>
<evidence type="ECO:0000269" key="11">
    <source>
    </source>
</evidence>
<evidence type="ECO:0000269" key="12">
    <source>
    </source>
</evidence>
<evidence type="ECO:0000269" key="13">
    <source>
    </source>
</evidence>
<evidence type="ECO:0000303" key="14">
    <source>
    </source>
</evidence>
<evidence type="ECO:0000303" key="15">
    <source>
    </source>
</evidence>
<evidence type="ECO:0000305" key="16"/>
<reference key="1">
    <citation type="journal article" date="1997" name="Gene">
        <title>PL48: a novel gene associated with cytotrophoblast and lineage-specific HL-60 cell differentiation.</title>
        <authorList>
            <person name="Dakour J."/>
            <person name="Li H."/>
            <person name="Morrish D.W."/>
        </authorList>
    </citation>
    <scope>NUCLEOTIDE SEQUENCE [MRNA] (ISOFORM 2)</scope>
    <scope>TISSUE SPECIFICITY</scope>
    <scope>INDUCTION</scope>
    <source>
        <tissue>Placenta</tissue>
    </source>
</reference>
<reference key="2">
    <citation type="journal article" date="1997" name="DNA Res.">
        <title>Prediction of the coding sequences of unidentified human genes. VII. The complete sequences of 100 new cDNA clones from brain which can code for large proteins in vitro.</title>
        <authorList>
            <person name="Nagase T."/>
            <person name="Ishikawa K."/>
            <person name="Nakajima D."/>
            <person name="Ohira M."/>
            <person name="Seki N."/>
            <person name="Miyajima N."/>
            <person name="Tanaka A."/>
            <person name="Kotani H."/>
            <person name="Nomura N."/>
            <person name="Ohara O."/>
        </authorList>
    </citation>
    <scope>NUCLEOTIDE SEQUENCE [LARGE SCALE MRNA] (ISOFORM 1)</scope>
    <scope>VARIANTS MET-320 AND GLN-868</scope>
    <source>
        <tissue>Brain</tissue>
    </source>
</reference>
<reference key="3">
    <citation type="submission" date="2004-01" db="EMBL/GenBank/DDBJ databases">
        <authorList>
            <person name="Ohara O."/>
            <person name="Nagase T."/>
            <person name="Kikuno R."/>
            <person name="Nomura N."/>
        </authorList>
    </citation>
    <scope>SEQUENCE REVISION</scope>
</reference>
<reference key="4">
    <citation type="journal article" date="2003" name="Nature">
        <title>The DNA sequence and analysis of human chromosome 6.</title>
        <authorList>
            <person name="Mungall A.J."/>
            <person name="Palmer S.A."/>
            <person name="Sims S.K."/>
            <person name="Edwards C.A."/>
            <person name="Ashurst J.L."/>
            <person name="Wilming L."/>
            <person name="Jones M.C."/>
            <person name="Horton R."/>
            <person name="Hunt S.E."/>
            <person name="Scott C.E."/>
            <person name="Gilbert J.G.R."/>
            <person name="Clamp M.E."/>
            <person name="Bethel G."/>
            <person name="Milne S."/>
            <person name="Ainscough R."/>
            <person name="Almeida J.P."/>
            <person name="Ambrose K.D."/>
            <person name="Andrews T.D."/>
            <person name="Ashwell R.I.S."/>
            <person name="Babbage A.K."/>
            <person name="Bagguley C.L."/>
            <person name="Bailey J."/>
            <person name="Banerjee R."/>
            <person name="Barker D.J."/>
            <person name="Barlow K.F."/>
            <person name="Bates K."/>
            <person name="Beare D.M."/>
            <person name="Beasley H."/>
            <person name="Beasley O."/>
            <person name="Bird C.P."/>
            <person name="Blakey S.E."/>
            <person name="Bray-Allen S."/>
            <person name="Brook J."/>
            <person name="Brown A.J."/>
            <person name="Brown J.Y."/>
            <person name="Burford D.C."/>
            <person name="Burrill W."/>
            <person name="Burton J."/>
            <person name="Carder C."/>
            <person name="Carter N.P."/>
            <person name="Chapman J.C."/>
            <person name="Clark S.Y."/>
            <person name="Clark G."/>
            <person name="Clee C.M."/>
            <person name="Clegg S."/>
            <person name="Cobley V."/>
            <person name="Collier R.E."/>
            <person name="Collins J.E."/>
            <person name="Colman L.K."/>
            <person name="Corby N.R."/>
            <person name="Coville G.J."/>
            <person name="Culley K.M."/>
            <person name="Dhami P."/>
            <person name="Davies J."/>
            <person name="Dunn M."/>
            <person name="Earthrowl M.E."/>
            <person name="Ellington A.E."/>
            <person name="Evans K.A."/>
            <person name="Faulkner L."/>
            <person name="Francis M.D."/>
            <person name="Frankish A."/>
            <person name="Frankland J."/>
            <person name="French L."/>
            <person name="Garner P."/>
            <person name="Garnett J."/>
            <person name="Ghori M.J."/>
            <person name="Gilby L.M."/>
            <person name="Gillson C.J."/>
            <person name="Glithero R.J."/>
            <person name="Grafham D.V."/>
            <person name="Grant M."/>
            <person name="Gribble S."/>
            <person name="Griffiths C."/>
            <person name="Griffiths M.N.D."/>
            <person name="Hall R."/>
            <person name="Halls K.S."/>
            <person name="Hammond S."/>
            <person name="Harley J.L."/>
            <person name="Hart E.A."/>
            <person name="Heath P.D."/>
            <person name="Heathcott R."/>
            <person name="Holmes S.J."/>
            <person name="Howden P.J."/>
            <person name="Howe K.L."/>
            <person name="Howell G.R."/>
            <person name="Huckle E."/>
            <person name="Humphray S.J."/>
            <person name="Humphries M.D."/>
            <person name="Hunt A.R."/>
            <person name="Johnson C.M."/>
            <person name="Joy A.A."/>
            <person name="Kay M."/>
            <person name="Keenan S.J."/>
            <person name="Kimberley A.M."/>
            <person name="King A."/>
            <person name="Laird G.K."/>
            <person name="Langford C."/>
            <person name="Lawlor S."/>
            <person name="Leongamornlert D.A."/>
            <person name="Leversha M."/>
            <person name="Lloyd C.R."/>
            <person name="Lloyd D.M."/>
            <person name="Loveland J.E."/>
            <person name="Lovell J."/>
            <person name="Martin S."/>
            <person name="Mashreghi-Mohammadi M."/>
            <person name="Maslen G.L."/>
            <person name="Matthews L."/>
            <person name="McCann O.T."/>
            <person name="McLaren S.J."/>
            <person name="McLay K."/>
            <person name="McMurray A."/>
            <person name="Moore M.J.F."/>
            <person name="Mullikin J.C."/>
            <person name="Niblett D."/>
            <person name="Nickerson T."/>
            <person name="Novik K.L."/>
            <person name="Oliver K."/>
            <person name="Overton-Larty E.K."/>
            <person name="Parker A."/>
            <person name="Patel R."/>
            <person name="Pearce A.V."/>
            <person name="Peck A.I."/>
            <person name="Phillimore B.J.C.T."/>
            <person name="Phillips S."/>
            <person name="Plumb R.W."/>
            <person name="Porter K.M."/>
            <person name="Ramsey Y."/>
            <person name="Ranby S.A."/>
            <person name="Rice C.M."/>
            <person name="Ross M.T."/>
            <person name="Searle S.M."/>
            <person name="Sehra H.K."/>
            <person name="Sheridan E."/>
            <person name="Skuce C.D."/>
            <person name="Smith S."/>
            <person name="Smith M."/>
            <person name="Spraggon L."/>
            <person name="Squares S.L."/>
            <person name="Steward C.A."/>
            <person name="Sycamore N."/>
            <person name="Tamlyn-Hall G."/>
            <person name="Tester J."/>
            <person name="Theaker A.J."/>
            <person name="Thomas D.W."/>
            <person name="Thorpe A."/>
            <person name="Tracey A."/>
            <person name="Tromans A."/>
            <person name="Tubby B."/>
            <person name="Wall M."/>
            <person name="Wallis J.M."/>
            <person name="West A.P."/>
            <person name="White S.S."/>
            <person name="Whitehead S.L."/>
            <person name="Whittaker H."/>
            <person name="Wild A."/>
            <person name="Willey D.J."/>
            <person name="Wilmer T.E."/>
            <person name="Wood J.M."/>
            <person name="Wray P.W."/>
            <person name="Wyatt J.C."/>
            <person name="Young L."/>
            <person name="Younger R.M."/>
            <person name="Bentley D.R."/>
            <person name="Coulson A."/>
            <person name="Durbin R.M."/>
            <person name="Hubbard T."/>
            <person name="Sulston J.E."/>
            <person name="Dunham I."/>
            <person name="Rogers J."/>
            <person name="Beck S."/>
        </authorList>
    </citation>
    <scope>NUCLEOTIDE SEQUENCE [LARGE SCALE GENOMIC DNA]</scope>
</reference>
<reference key="5">
    <citation type="submission" date="2005-07" db="EMBL/GenBank/DDBJ databases">
        <authorList>
            <person name="Mural R.J."/>
            <person name="Istrail S."/>
            <person name="Sutton G.G."/>
            <person name="Florea L."/>
            <person name="Halpern A.L."/>
            <person name="Mobarry C.M."/>
            <person name="Lippert R."/>
            <person name="Walenz B."/>
            <person name="Shatkay H."/>
            <person name="Dew I."/>
            <person name="Miller J.R."/>
            <person name="Flanigan M.J."/>
            <person name="Edwards N.J."/>
            <person name="Bolanos R."/>
            <person name="Fasulo D."/>
            <person name="Halldorsson B.V."/>
            <person name="Hannenhalli S."/>
            <person name="Turner R."/>
            <person name="Yooseph S."/>
            <person name="Lu F."/>
            <person name="Nusskern D.R."/>
            <person name="Shue B.C."/>
            <person name="Zheng X.H."/>
            <person name="Zhong F."/>
            <person name="Delcher A.L."/>
            <person name="Huson D.H."/>
            <person name="Kravitz S.A."/>
            <person name="Mouchard L."/>
            <person name="Reinert K."/>
            <person name="Remington K.A."/>
            <person name="Clark A.G."/>
            <person name="Waterman M.S."/>
            <person name="Eichler E.E."/>
            <person name="Adams M.D."/>
            <person name="Hunkapiller M.W."/>
            <person name="Myers E.W."/>
            <person name="Venter J.C."/>
        </authorList>
    </citation>
    <scope>NUCLEOTIDE SEQUENCE [LARGE SCALE GENOMIC DNA]</scope>
</reference>
<reference key="6">
    <citation type="journal article" date="2004" name="Genome Res.">
        <title>The status, quality, and expansion of the NIH full-length cDNA project: the Mammalian Gene Collection (MGC).</title>
        <authorList>
            <consortium name="The MGC Project Team"/>
        </authorList>
    </citation>
    <scope>NUCLEOTIDE SEQUENCE [LARGE SCALE MRNA] (ISOFORM 2)</scope>
    <source>
        <tissue>Placenta</tissue>
    </source>
</reference>
<reference key="7">
    <citation type="journal article" date="2007" name="Dev. Biol.">
        <title>C6ORF32 is upregulated during muscle cell differentiation and induces the formation of cellular filopodia.</title>
        <authorList>
            <person name="Yoon S."/>
            <person name="Molloy M.J."/>
            <person name="Wu M.P."/>
            <person name="Cowan D.B."/>
            <person name="Gussoni E."/>
        </authorList>
    </citation>
    <scope>FUNCTION (ISOFORM 2)</scope>
    <scope>TISSUE SPECIFICITY</scope>
    <scope>SUBCELLULAR LOCATION</scope>
    <scope>DOMAIN</scope>
</reference>
<reference key="8">
    <citation type="journal article" date="2008" name="J. Proteome Res.">
        <title>Phosphorylation analysis of primary human T lymphocytes using sequential IMAC and titanium oxide enrichment.</title>
        <authorList>
            <person name="Carrascal M."/>
            <person name="Ovelleiro D."/>
            <person name="Casas V."/>
            <person name="Gay M."/>
            <person name="Abian J."/>
        </authorList>
    </citation>
    <scope>IDENTIFICATION BY MASS SPECTROMETRY [LARGE SCALE ANALYSIS]</scope>
    <source>
        <tissue>T-cell</tissue>
    </source>
</reference>
<reference key="9">
    <citation type="journal article" date="2013" name="J. Immunol.">
        <title>Fam65b is a new transcriptional target of FOXO1 that regulates RhoA signaling for T lymphocyte migration.</title>
        <authorList>
            <person name="Rougerie P."/>
            <person name="Largeteau Q."/>
            <person name="Megrelis L."/>
            <person name="Carrette F."/>
            <person name="Lejeune T."/>
            <person name="Toffali L."/>
            <person name="Rossi B."/>
            <person name="Zeghouf M."/>
            <person name="Cherfils J."/>
            <person name="Constantin G."/>
            <person name="Laudanna C."/>
            <person name="Bismuth G."/>
            <person name="Mangeney M."/>
            <person name="Delon J."/>
        </authorList>
    </citation>
    <scope>FUNCTION</scope>
    <scope>INTERACTION WITH RHOA (ISOFORMS 1 AND 2)</scope>
    <scope>SUBCELLULAR LOCATION</scope>
    <scope>TISSUE SPECIFICITY</scope>
    <scope>INDUCTION (ISOFORMS 1 AND 2)</scope>
</reference>
<reference key="10">
    <citation type="journal article" date="2014" name="FASEB J.">
        <title>Fam65b is important for formation of the HDAC6-dysferlin protein complex during myogenic cell differentiation.</title>
        <authorList>
            <person name="Balasubramanian A."/>
            <person name="Kawahara G."/>
            <person name="Gupta V.A."/>
            <person name="Rozkalne A."/>
            <person name="Beauvais A."/>
            <person name="Kunkel L.M."/>
            <person name="Gussoni E."/>
        </authorList>
    </citation>
    <scope>FUNCTION</scope>
    <scope>TISSUE SPECIFICITY</scope>
    <scope>ACETYLATION</scope>
    <scope>SUBCELLULAR LOCATION</scope>
    <scope>INTERACTION WITH 14-3-3 PROTEINS; HDAC6; DYSF AND MYOF</scope>
    <scope>INDUCTION</scope>
</reference>
<reference key="11">
    <citation type="journal article" date="2014" name="Proc. Natl. Acad. Sci. U.S.A.">
        <title>FAM65B is a membrane-associated protein of hair cell stereocilia required for hearing.</title>
        <authorList>
            <person name="Diaz-Horta O."/>
            <person name="Subasioglu-Uzak A."/>
            <person name="Grati M."/>
            <person name="DeSmidt A."/>
            <person name="Foster J."/>
            <person name="Cao L."/>
            <person name="Bademci G."/>
            <person name="Tokgoz-Yilmaz S."/>
            <person name="Duman D."/>
            <person name="Cengiz F.B."/>
            <person name="Abad C."/>
            <person name="Mittal R."/>
            <person name="Blanton S."/>
            <person name="Liu X.Z."/>
            <person name="Farooq A."/>
            <person name="Walz K."/>
            <person name="Lu Z."/>
            <person name="Tekin M."/>
        </authorList>
    </citation>
    <scope>FUNCTION</scope>
    <scope>INVOLVEMENT IN DFNB104</scope>
</reference>
<reference key="12">
    <citation type="journal article" date="2015" name="J. Cell Sci.">
        <title>Front-signal-dependent accumulation of the RHOA inhibitor FAM65B at leading edges polarizes neutrophils.</title>
        <authorList>
            <person name="Gao K."/>
            <person name="Tang W."/>
            <person name="Li Y."/>
            <person name="Zhang P."/>
            <person name="Wang D."/>
            <person name="Yu L."/>
            <person name="Wang C."/>
            <person name="Wu D."/>
        </authorList>
    </citation>
    <scope>FUNCTION (ISOFORM 2)</scope>
    <scope>INTERACTION WITH 14-3-3 PROTEINS; RHOA; YWHAB; YWHAE AND YWHAQ (ISOFORM 2)</scope>
    <scope>PHOSPHORYLATION AT SER-21; SER-37; SER-341; SER-523 AND SER-585 (ISOFORM 2)</scope>
    <scope>SUBCELLULAR LOCATION (ISOFORM 2)</scope>
    <scope>MUTAGENESIS OF SER-21; SER-37; 151-ARG-LEU-152; 155-GLY-ALA-156; SER-341; SER-523 AND SER-585</scope>
    <scope>IDENTIFICATION BY MASS SPECTROMETRY (ISOFORM 2)</scope>
</reference>
<reference key="13">
    <citation type="journal article" date="2016" name="Oncotarget">
        <title>FAM65B controls the proliferation of transformed and primary T cells.</title>
        <authorList>
            <person name="Froehlich J."/>
            <person name="Versapuech M."/>
            <person name="Megrelis L."/>
            <person name="Largeteau Q."/>
            <person name="Meunier S."/>
            <person name="Tanchot C."/>
            <person name="Bismuth G."/>
            <person name="Delon J."/>
            <person name="Mangeney M."/>
        </authorList>
    </citation>
    <scope>FUNCTION (ISOFORM 2)</scope>
    <scope>INTERACTION WITH 14-3-3 PROTEINS AND HDAC6 (ISOFORM 2)</scope>
    <scope>PHOSPHORYLATION (ISOFORM 2)</scope>
    <scope>MUTAGENESIS OF SER-21; SER-37; 151-ARG-LEU-152; SER-341; SER-523 AND SER-585</scope>
    <scope>INDUCTION (ISOFORMS 1 AND 2)</scope>
    <scope>TISSUE SPECIFICITY</scope>
</reference>
<reference key="14">
    <citation type="journal article" date="2020" name="J. Med. Genet.">
        <title>A RIPOR2 in-frame deletion is a frequent and highly penetrant cause of adult-onset hearing loss.</title>
        <authorList>
            <person name="de Bruijn S.E."/>
            <person name="Smits J.J."/>
            <person name="Liu C."/>
            <person name="Lanting C.P."/>
            <person name="Beynon A.J."/>
            <person name="Blankevoort J."/>
            <person name="Oostrik J."/>
            <person name="Koole W."/>
            <person name="de Vrieze E."/>
            <person name="Cremers C.W.R.J."/>
            <person name="Cremers F.P.M."/>
            <person name="Roosing S."/>
            <person name="Yntema H.G."/>
            <person name="Kunst H.P.M."/>
            <person name="Zhao B."/>
            <person name="Pennings R.J.E."/>
            <person name="Kremer H."/>
        </authorList>
    </citation>
    <scope>INVOLVEMENT IN DFNA21</scope>
    <scope>VARIANT DFNA21 566-GLN--LYS-569 DEL</scope>
    <scope>CHARACTERIZATION OF VARIANT DFNA21 566-GLN--LYS-569 DEL</scope>
</reference>
<accession>Q9Y4F9</accession>
<accession>A6NHP2</accession>
<accession>Q13529</accession>
<accession>Q5VV37</accession>
<accession>Q5VV38</accession>
<accession>Q9BQ28</accession>
<comment type="function">
    <text evidence="2 5 6 7 8 10">Acts as an inhibitor of the small GTPase RHOA and plays several roles in the regulation of myoblast and hair cell differentiation, lymphocyte T proliferation and neutrophil polarization (PubMed:17150207, PubMed:23241886, PubMed:24687993, PubMed:24958875, PubMed:25588844, PubMed:27556504). Inhibits chemokine-induced T lymphocyte responses, such as cell adhesion, polarization and migration (PubMed:23241886). Involved also in the regulation of neutrophil polarization, chemotaxis and adhesion (By similarity). Required for normal development of inner and outer hair cell stereocilia within the cochlea of the inner ear (By similarity). Plays a role for maintaining the structural organization of the basal domain of stereocilia (By similarity). Involved in mechanosensory hair cell function (By similarity). Required for normal hearing (PubMed:24958875).</text>
</comment>
<comment type="function">
    <molecule>Isoform 2</molecule>
    <text evidence="5 9 10">Acts as an inhibitor of the small GTPase RHOA (PubMed:25588844). Plays a role in fetal mononuclear myoblast differentiation by promoting filopodia and myotube formation (PubMed:17150207). Maintains naive T lymphocytes in a quiescent state (PubMed:27556504).</text>
</comment>
<comment type="subunit">
    <text evidence="2 6 7 9 10">Homooligomer; homooligomerization is regulated by RHOC and leads to the formation of concatemers through the association of N- and C-termini (By similarity). Interacts with 14-3-3 proteins; these interactions occur during myogenic cell differentiation (PubMed:24687993). Interacts with HDAC6; this interaction occurs during early myogenic differentiation and prevents HDAC6 to deacetylate tubulin (PubMed:24687993). Interacts with DYSF; this interaction occurs during early myogenic differentiation (PubMed:24687993). Interacts with MYOF (PubMed:24687993). Interacts with RHOC (By similarity). Isoform 1 and isoform 2 interact (via active GTP- or inactive GDP-bound forms) with RHOA; these interactions are direct, block the loading of GTP to RHOA and decrease upon chemokine CCL19 stimulation in primary T lymphocytes (PubMed:23241886, PubMed:25588844). Isoform 2 interacts (phosphorylated form) with HDAC6; this interaction induces T cell proliferation arrest (PubMed:27556504). Isoform 2 interacts (phosphorylated form) with 14-3-3 proteins; these interactions induces T cell proliferation arrest (PubMed:27556504). Isoform 2 interacts with 14-3-3 proteins (PubMed:25588844). Isoform 2 interacts (via phosphorylated form) with YWHAB; this interaction occurs in a chemokine-dependent manner and does not compete for binding of RIPOR2 with RHOA nor blocks inhibition of RIPOR2-mediated RHOA activity (PubMed:25588844). Isoform 2 interacts with YWHAE (PubMed:25588844). Isoform 2 interacts with YWHAQ (PubMed:25588844).</text>
</comment>
<comment type="interaction">
    <interactant intactId="EBI-2798942">
        <id>Q9Y4F9</id>
    </interactant>
    <interactant intactId="EBI-446668">
        <id>P61586</id>
        <label>RHOA</label>
    </interactant>
    <organismsDiffer>false</organismsDiffer>
    <experiments>4</experiments>
</comment>
<comment type="interaction">
    <interactant intactId="EBI-2798942">
        <id>Q9Y4F9</id>
    </interactant>
    <interactant intactId="EBI-747589">
        <id>P08134</id>
        <label>RHOC</label>
    </interactant>
    <organismsDiffer>false</organismsDiffer>
    <experiments>5</experiments>
</comment>
<comment type="interaction">
    <interactant intactId="EBI-14509742">
        <id>Q9Y4F9-2</id>
    </interactant>
    <interactant intactId="EBI-446668">
        <id>P61586</id>
        <label>RHOA</label>
    </interactant>
    <organismsDiffer>false</organismsDiffer>
    <experiments>3</experiments>
</comment>
<comment type="subcellular location">
    <subcellularLocation>
        <location evidence="5 6">Cytoplasm</location>
    </subcellularLocation>
    <subcellularLocation>
        <location evidence="5">Cytoplasm</location>
        <location evidence="5">Cytoskeleton</location>
    </subcellularLocation>
    <subcellularLocation>
        <location evidence="5">Cell projection</location>
        <location evidence="5">Filopodium</location>
    </subcellularLocation>
    <subcellularLocation>
        <location evidence="2">Cell projection</location>
        <location evidence="2">Stereocilium</location>
    </subcellularLocation>
    <subcellularLocation>
        <location evidence="1">Cell projection</location>
        <location evidence="1">Stereocilium membrane</location>
    </subcellularLocation>
    <subcellularLocation>
        <location evidence="1">Apical cell membrane</location>
    </subcellularLocation>
    <text evidence="1 2 5">Localized in the cytoplasm in cells undergoing mitosis (PubMed:17150207). Colocalized with F-actin (PubMed:17150207). Localized with RHOC within the basal domain of hair cell stereocilia, near the taper region (By similarity). Detected in punctate pattern forming a circumferential ring at the stereocilia base (By similarity). Localized to the apical stereocilia of inner and outer hair cells (By similarity). Not detected as a membrane-associated protein in stereocilia (By similarity).</text>
</comment>
<comment type="subcellular location">
    <molecule>Isoform 1</molecule>
    <subcellularLocation>
        <location evidence="7">Cytoplasm</location>
    </subcellularLocation>
</comment>
<comment type="subcellular location">
    <molecule>Isoform 2</molecule>
    <subcellularLocation>
        <location evidence="9">Cytoplasm</location>
    </subcellularLocation>
    <text evidence="9">Accumulates at the leading edge of polarized neutrophils in a chemokine-dependent manner (PubMed:25588844).</text>
</comment>
<comment type="alternative products">
    <event type="alternative splicing"/>
    <isoform>
        <id>Q9Y4F9-1</id>
        <name>1</name>
        <sequence type="displayed"/>
    </isoform>
    <isoform>
        <id>Q9Y4F9-2</id>
        <name>2</name>
        <name evidence="15">PL48</name>
        <sequence type="described" ref="VSP_025904 VSP_025905 VSP_025906"/>
    </isoform>
</comment>
<comment type="tissue specificity">
    <text evidence="5 6 10 12">Expressed in primary fetal mononuclear myoblast (PubMed:17150207). Expressed strongly in naive T lymphocytes (PubMed:27556504). Expressed weakly in activated T lymphocytes (at protein level) (PubMed:27556504). Expressed in blood cells and adult tissues of hematopoietic origin, such as the secondary lymphoid organs (PubMed:23241886). Expressed in cytotrophoblast (PubMed:9055809).</text>
</comment>
<comment type="induction">
    <text evidence="5 6 7 10 12">Up-regulated during fetal mononuclear myoblast differentiation (PubMed:17150207, PubMed:24687993). Up-regulated during cytotrophoblast differentiation (PubMed:9055809). Up-regulated during granulocyte differentiation (PubMed:9055809). Isoform 1 and isoform 2 are down-regulated in T lymphocytes upon T-cell antigen receptor (TCR) stimulation (PubMed:27556504). Isoform 1 and isoform 2 are up-regulated by FOXO1 (PubMed:23241886).</text>
</comment>
<comment type="PTM">
    <text evidence="9 10">Phosphorylated. Isoform 2 is phosphorylated in T cells (PubMed:27556504). Chemokine-induced phosphorylation of isoform 2 in neutrophils occurs in a PKC- and AKT-dependent manner, resulting in RIPOR2 interaction with YWHAB and stabilization (PubMed:25588844). Isoform 2 is phosphorylated by PKCA, AKT1 and MAPKAPK1A; in vitro (PubMed:25588844).</text>
</comment>
<comment type="PTM">
    <text evidence="7">Acetylated during myogenic differentiation.</text>
</comment>
<comment type="disease" evidence="8">
    <disease id="DI-04500">
        <name>Deafness, autosomal recessive, 104</name>
        <acronym>DFNB104</acronym>
        <description>A form of non-syndromic sensorineural hearing loss. Sensorineural deafness results from damage to the neural receptors of the inner ear, the nerve pathways to the brain, or the area of the brain that receives sound information.</description>
        <dbReference type="MIM" id="616515"/>
    </disease>
    <text>The disease is caused by variants affecting the gene represented in this entry.</text>
</comment>
<comment type="disease" evidence="11">
    <disease id="DI-06409">
        <name>Deafness, autosomal dominant, 21</name>
        <acronym>DFNA21</acronym>
        <description>A form of non-syndromic sensorineural hearing loss. Sensorineural deafness results from damage to the neural receptors of the inner ear, the nerve pathways to the brain, or the area of the brain that receives sound information. DFNA21 is an autosomal dominant, progressive form with incomplete penetrance. Age at onset ranges from infancy to late adulthood.</description>
        <dbReference type="MIM" id="607017"/>
    </disease>
    <text>The disease is caused by variants affecting the gene represented in this entry.</text>
</comment>
<comment type="miscellaneous">
    <text>Cells lacking isoform 2 exhibit a severe reduction of myotube formation. In contrast, isoform 2 overexpression induces formation of filopodia.</text>
</comment>
<comment type="similarity">
    <text evidence="16">Belongs to the RIPOR family.</text>
</comment>
<comment type="sequence caution" evidence="16">
    <conflict type="frameshift">
        <sequence resource="EMBL-CDS" id="AAC51134"/>
    </conflict>
</comment>
<comment type="sequence caution" evidence="16">
    <conflict type="erroneous initiation">
        <sequence resource="EMBL-CDS" id="BAA20840"/>
    </conflict>
    <text>Extended N-terminus.</text>
</comment>
<dbReference type="EMBL" id="U49187">
    <property type="protein sequence ID" value="AAC51134.1"/>
    <property type="status" value="ALT_FRAME"/>
    <property type="molecule type" value="mRNA"/>
</dbReference>
<dbReference type="EMBL" id="AB002384">
    <property type="protein sequence ID" value="BAA20840.2"/>
    <property type="status" value="ALT_INIT"/>
    <property type="molecule type" value="mRNA"/>
</dbReference>
<dbReference type="EMBL" id="AL512428">
    <property type="status" value="NOT_ANNOTATED_CDS"/>
    <property type="molecule type" value="Genomic_DNA"/>
</dbReference>
<dbReference type="EMBL" id="AL078584">
    <property type="status" value="NOT_ANNOTATED_CDS"/>
    <property type="molecule type" value="Genomic_DNA"/>
</dbReference>
<dbReference type="EMBL" id="CH471087">
    <property type="protein sequence ID" value="EAW55470.1"/>
    <property type="molecule type" value="Genomic_DNA"/>
</dbReference>
<dbReference type="EMBL" id="BC001232">
    <property type="protein sequence ID" value="AAH01232.1"/>
    <property type="molecule type" value="mRNA"/>
</dbReference>
<dbReference type="CCDS" id="CCDS47383.1">
    <molecule id="Q9Y4F9-1"/>
</dbReference>
<dbReference type="CCDS" id="CCDS47384.1">
    <molecule id="Q9Y4F9-2"/>
</dbReference>
<dbReference type="RefSeq" id="NP_001273375.1">
    <property type="nucleotide sequence ID" value="NM_001286446.2"/>
</dbReference>
<dbReference type="RefSeq" id="NP_001273376.1">
    <property type="nucleotide sequence ID" value="NM_001286447.1"/>
</dbReference>
<dbReference type="RefSeq" id="NP_055537.2">
    <molecule id="Q9Y4F9-1"/>
    <property type="nucleotide sequence ID" value="NM_014722.4"/>
</dbReference>
<dbReference type="RefSeq" id="NP_056948.2">
    <molecule id="Q9Y4F9-2"/>
    <property type="nucleotide sequence ID" value="NM_015864.3"/>
</dbReference>
<dbReference type="RefSeq" id="XP_016867015.1">
    <property type="nucleotide sequence ID" value="XM_017011526.1"/>
</dbReference>
<dbReference type="RefSeq" id="XP_016867016.1">
    <property type="nucleotide sequence ID" value="XM_017011527.1"/>
</dbReference>
<dbReference type="BioGRID" id="115098">
    <property type="interactions" value="13"/>
</dbReference>
<dbReference type="FunCoup" id="Q9Y4F9">
    <property type="interactions" value="158"/>
</dbReference>
<dbReference type="IntAct" id="Q9Y4F9">
    <property type="interactions" value="10"/>
</dbReference>
<dbReference type="STRING" id="9606.ENSP00000259698"/>
<dbReference type="GlyCosmos" id="Q9Y4F9">
    <property type="glycosylation" value="1 site, 1 glycan"/>
</dbReference>
<dbReference type="GlyGen" id="Q9Y4F9">
    <property type="glycosylation" value="1 site, 1 O-linked glycan (1 site)"/>
</dbReference>
<dbReference type="iPTMnet" id="Q9Y4F9"/>
<dbReference type="PhosphoSitePlus" id="Q9Y4F9"/>
<dbReference type="BioMuta" id="RIPOR2"/>
<dbReference type="DMDM" id="296439477"/>
<dbReference type="jPOST" id="Q9Y4F9"/>
<dbReference type="MassIVE" id="Q9Y4F9"/>
<dbReference type="PaxDb" id="9606-ENSP00000482957"/>
<dbReference type="PeptideAtlas" id="Q9Y4F9"/>
<dbReference type="ProteomicsDB" id="86200">
    <molecule id="Q9Y4F9-1"/>
</dbReference>
<dbReference type="ProteomicsDB" id="86201">
    <molecule id="Q9Y4F9-2"/>
</dbReference>
<dbReference type="Antibodypedia" id="25358">
    <property type="antibodies" value="176 antibodies from 28 providers"/>
</dbReference>
<dbReference type="DNASU" id="9750"/>
<dbReference type="Ensembl" id="ENST00000259698.9">
    <molecule id="Q9Y4F9-1"/>
    <property type="protein sequence ID" value="ENSP00000259698.4"/>
    <property type="gene ID" value="ENSG00000111913.20"/>
</dbReference>
<dbReference type="Ensembl" id="ENST00000378023.8">
    <molecule id="Q9Y4F9-2"/>
    <property type="protein sequence ID" value="ENSP00000367262.4"/>
    <property type="gene ID" value="ENSG00000111913.20"/>
</dbReference>
<dbReference type="Ensembl" id="ENST00000613507.4">
    <molecule id="Q9Y4F9-1"/>
    <property type="protein sequence ID" value="ENSP00000482957.1"/>
    <property type="gene ID" value="ENSG00000111913.20"/>
</dbReference>
<dbReference type="Ensembl" id="ENST00000643623.1">
    <molecule id="Q9Y4F9-2"/>
    <property type="protein sequence ID" value="ENSP00000495245.1"/>
    <property type="gene ID" value="ENSG00000111913.20"/>
</dbReference>
<dbReference type="Ensembl" id="ENST00000644621.1">
    <molecule id="Q9Y4F9-2"/>
    <property type="protein sequence ID" value="ENSP00000495914.1"/>
    <property type="gene ID" value="ENSG00000111913.20"/>
</dbReference>
<dbReference type="GeneID" id="9750"/>
<dbReference type="KEGG" id="hsa:9750"/>
<dbReference type="UCSC" id="uc003neo.3">
    <molecule id="Q9Y4F9-1"/>
    <property type="organism name" value="human"/>
</dbReference>
<dbReference type="AGR" id="HGNC:13872"/>
<dbReference type="CTD" id="9750"/>
<dbReference type="DisGeNET" id="9750"/>
<dbReference type="GeneCards" id="RIPOR2"/>
<dbReference type="HGNC" id="HGNC:13872">
    <property type="gene designation" value="RIPOR2"/>
</dbReference>
<dbReference type="HPA" id="ENSG00000111913">
    <property type="expression patterns" value="Tissue enhanced (lymphoid)"/>
</dbReference>
<dbReference type="MalaCards" id="RIPOR2"/>
<dbReference type="MIM" id="607017">
    <property type="type" value="phenotype"/>
</dbReference>
<dbReference type="MIM" id="611410">
    <property type="type" value="gene"/>
</dbReference>
<dbReference type="MIM" id="616515">
    <property type="type" value="phenotype"/>
</dbReference>
<dbReference type="neXtProt" id="NX_Q9Y4F9"/>
<dbReference type="OpenTargets" id="ENSG00000111913"/>
<dbReference type="Orphanet" id="90636">
    <property type="disease" value="Rare autosomal recessive non-syndromic sensorineural deafness type DFNB"/>
</dbReference>
<dbReference type="PharmGKB" id="PA162387677"/>
<dbReference type="VEuPathDB" id="HostDB:ENSG00000111913"/>
<dbReference type="eggNOG" id="ENOG502QQ7T">
    <property type="taxonomic scope" value="Eukaryota"/>
</dbReference>
<dbReference type="GeneTree" id="ENSGT00940000153717"/>
<dbReference type="HOGENOM" id="CLU_432085_0_0_1"/>
<dbReference type="InParanoid" id="Q9Y4F9"/>
<dbReference type="OrthoDB" id="9999654at2759"/>
<dbReference type="PAN-GO" id="Q9Y4F9">
    <property type="GO annotations" value="0 GO annotations based on evolutionary models"/>
</dbReference>
<dbReference type="PhylomeDB" id="Q9Y4F9"/>
<dbReference type="TreeFam" id="TF329332"/>
<dbReference type="PathwayCommons" id="Q9Y4F9"/>
<dbReference type="Reactome" id="R-HSA-9662360">
    <property type="pathway name" value="Sensory processing of sound by inner hair cells of the cochlea"/>
</dbReference>
<dbReference type="Reactome" id="R-HSA-9662361">
    <property type="pathway name" value="Sensory processing of sound by outer hair cells of the cochlea"/>
</dbReference>
<dbReference type="SignaLink" id="Q9Y4F9"/>
<dbReference type="BioGRID-ORCS" id="9750">
    <property type="hits" value="7 hits in 1145 CRISPR screens"/>
</dbReference>
<dbReference type="ChiTaRS" id="FAM65B">
    <property type="organism name" value="human"/>
</dbReference>
<dbReference type="GenomeRNAi" id="9750"/>
<dbReference type="Pharos" id="Q9Y4F9">
    <property type="development level" value="Tbio"/>
</dbReference>
<dbReference type="PRO" id="PR:Q9Y4F9"/>
<dbReference type="Proteomes" id="UP000005640">
    <property type="component" value="Chromosome 6"/>
</dbReference>
<dbReference type="RNAct" id="Q9Y4F9">
    <property type="molecule type" value="protein"/>
</dbReference>
<dbReference type="Bgee" id="ENSG00000111913">
    <property type="expression patterns" value="Expressed in blood and 167 other cell types or tissues"/>
</dbReference>
<dbReference type="ExpressionAtlas" id="Q9Y4F9">
    <property type="expression patterns" value="baseline and differential"/>
</dbReference>
<dbReference type="GO" id="GO:0016324">
    <property type="term" value="C:apical plasma membrane"/>
    <property type="evidence" value="ECO:0007669"/>
    <property type="project" value="UniProtKB-SubCell"/>
</dbReference>
<dbReference type="GO" id="GO:0005737">
    <property type="term" value="C:cytoplasm"/>
    <property type="evidence" value="ECO:0000314"/>
    <property type="project" value="UniProtKB"/>
</dbReference>
<dbReference type="GO" id="GO:0005856">
    <property type="term" value="C:cytoskeleton"/>
    <property type="evidence" value="ECO:0000314"/>
    <property type="project" value="UniProtKB"/>
</dbReference>
<dbReference type="GO" id="GO:0005829">
    <property type="term" value="C:cytosol"/>
    <property type="evidence" value="ECO:0000314"/>
    <property type="project" value="HPA"/>
</dbReference>
<dbReference type="GO" id="GO:0030175">
    <property type="term" value="C:filopodium"/>
    <property type="evidence" value="ECO:0000314"/>
    <property type="project" value="UniProtKB"/>
</dbReference>
<dbReference type="GO" id="GO:0032420">
    <property type="term" value="C:stereocilium"/>
    <property type="evidence" value="ECO:0000250"/>
    <property type="project" value="UniProtKB"/>
</dbReference>
<dbReference type="GO" id="GO:0060171">
    <property type="term" value="C:stereocilium membrane"/>
    <property type="evidence" value="ECO:0007669"/>
    <property type="project" value="UniProtKB-SubCell"/>
</dbReference>
<dbReference type="GO" id="GO:0071889">
    <property type="term" value="F:14-3-3 protein binding"/>
    <property type="evidence" value="ECO:0000314"/>
    <property type="project" value="UniProtKB"/>
</dbReference>
<dbReference type="GO" id="GO:0007155">
    <property type="term" value="P:cell adhesion"/>
    <property type="evidence" value="ECO:0007669"/>
    <property type="project" value="UniProtKB-KW"/>
</dbReference>
<dbReference type="GO" id="GO:0030154">
    <property type="term" value="P:cell differentiation"/>
    <property type="evidence" value="ECO:0007669"/>
    <property type="project" value="UniProtKB-KW"/>
</dbReference>
<dbReference type="GO" id="GO:1990869">
    <property type="term" value="P:cellular response to chemokine"/>
    <property type="evidence" value="ECO:0000314"/>
    <property type="project" value="UniProtKB"/>
</dbReference>
<dbReference type="GO" id="GO:0006935">
    <property type="term" value="P:chemotaxis"/>
    <property type="evidence" value="ECO:0007669"/>
    <property type="project" value="UniProtKB-KW"/>
</dbReference>
<dbReference type="GO" id="GO:0007517">
    <property type="term" value="P:muscle organ development"/>
    <property type="evidence" value="ECO:0007669"/>
    <property type="project" value="UniProtKB-KW"/>
</dbReference>
<dbReference type="GO" id="GO:0007162">
    <property type="term" value="P:negative regulation of cell adhesion"/>
    <property type="evidence" value="ECO:0000315"/>
    <property type="project" value="UniProtKB"/>
</dbReference>
<dbReference type="GO" id="GO:1903904">
    <property type="term" value="P:negative regulation of establishment of T cell polarity"/>
    <property type="evidence" value="ECO:0000315"/>
    <property type="project" value="UniProtKB"/>
</dbReference>
<dbReference type="GO" id="GO:1905872">
    <property type="term" value="P:negative regulation of protein localization to cell leading edge"/>
    <property type="evidence" value="ECO:0000250"/>
    <property type="project" value="UniProtKB"/>
</dbReference>
<dbReference type="GO" id="GO:2001107">
    <property type="term" value="P:negative regulation of Rho guanyl-nucleotide exchange factor activity"/>
    <property type="evidence" value="ECO:0000315"/>
    <property type="project" value="UniProtKB"/>
</dbReference>
<dbReference type="GO" id="GO:0035024">
    <property type="term" value="P:negative regulation of Rho protein signal transduction"/>
    <property type="evidence" value="ECO:0000315"/>
    <property type="project" value="UniProtKB"/>
</dbReference>
<dbReference type="GO" id="GO:2000405">
    <property type="term" value="P:negative regulation of T cell migration"/>
    <property type="evidence" value="ECO:0000315"/>
    <property type="project" value="UniProtKB"/>
</dbReference>
<dbReference type="GO" id="GO:0042130">
    <property type="term" value="P:negative regulation of T cell proliferation"/>
    <property type="evidence" value="ECO:0000315"/>
    <property type="project" value="UniProtKB"/>
</dbReference>
<dbReference type="GO" id="GO:0051491">
    <property type="term" value="P:positive regulation of filopodium assembly"/>
    <property type="evidence" value="ECO:0000315"/>
    <property type="project" value="UniProtKB"/>
</dbReference>
<dbReference type="GO" id="GO:0045663">
    <property type="term" value="P:positive regulation of myoblast differentiation"/>
    <property type="evidence" value="ECO:0000315"/>
    <property type="project" value="UniProtKB"/>
</dbReference>
<dbReference type="GO" id="GO:1901741">
    <property type="term" value="P:positive regulation of myoblast fusion"/>
    <property type="evidence" value="ECO:0000315"/>
    <property type="project" value="UniProtKB"/>
</dbReference>
<dbReference type="GO" id="GO:0090023">
    <property type="term" value="P:positive regulation of neutrophil chemotaxis"/>
    <property type="evidence" value="ECO:0000250"/>
    <property type="project" value="UniProtKB"/>
</dbReference>
<dbReference type="GO" id="GO:2000391">
    <property type="term" value="P:positive regulation of neutrophil extravasation"/>
    <property type="evidence" value="ECO:0000250"/>
    <property type="project" value="UniProtKB"/>
</dbReference>
<dbReference type="GO" id="GO:0051726">
    <property type="term" value="P:regulation of cell cycle"/>
    <property type="evidence" value="ECO:0000315"/>
    <property type="project" value="UniProtKB"/>
</dbReference>
<dbReference type="GO" id="GO:2000114">
    <property type="term" value="P:regulation of establishment of cell polarity"/>
    <property type="evidence" value="ECO:0000250"/>
    <property type="project" value="UniProtKB"/>
</dbReference>
<dbReference type="GO" id="GO:1901673">
    <property type="term" value="P:regulation of mitotic spindle assembly"/>
    <property type="evidence" value="ECO:0000315"/>
    <property type="project" value="UniProtKB"/>
</dbReference>
<dbReference type="GO" id="GO:0007605">
    <property type="term" value="P:sensory perception of sound"/>
    <property type="evidence" value="ECO:0000315"/>
    <property type="project" value="UniProtKB"/>
</dbReference>
<dbReference type="FunFam" id="1.25.10.10:FF:000191">
    <property type="entry name" value="RHO family interacting cell polarization regulator 2"/>
    <property type="match status" value="1"/>
</dbReference>
<dbReference type="Gene3D" id="1.25.10.10">
    <property type="entry name" value="Leucine-rich Repeat Variant"/>
    <property type="match status" value="1"/>
</dbReference>
<dbReference type="InterPro" id="IPR011989">
    <property type="entry name" value="ARM-like"/>
</dbReference>
<dbReference type="InterPro" id="IPR016024">
    <property type="entry name" value="ARM-type_fold"/>
</dbReference>
<dbReference type="InterPro" id="IPR031780">
    <property type="entry name" value="FAM65_N"/>
</dbReference>
<dbReference type="InterPro" id="IPR026136">
    <property type="entry name" value="RIPOR3"/>
</dbReference>
<dbReference type="PANTHER" id="PTHR15829">
    <property type="entry name" value="PROTEIN KINASE PKN/PRK1, EFFECTOR"/>
    <property type="match status" value="1"/>
</dbReference>
<dbReference type="PANTHER" id="PTHR15829:SF2">
    <property type="entry name" value="RHO FAMILY-INTERACTING CELL POLARIZATION REGULATOR 2"/>
    <property type="match status" value="1"/>
</dbReference>
<dbReference type="Pfam" id="PF15903">
    <property type="entry name" value="PL48"/>
    <property type="match status" value="1"/>
</dbReference>
<dbReference type="SUPFAM" id="SSF48371">
    <property type="entry name" value="ARM repeat"/>
    <property type="match status" value="1"/>
</dbReference>
<organism>
    <name type="scientific">Homo sapiens</name>
    <name type="common">Human</name>
    <dbReference type="NCBI Taxonomy" id="9606"/>
    <lineage>
        <taxon>Eukaryota</taxon>
        <taxon>Metazoa</taxon>
        <taxon>Chordata</taxon>
        <taxon>Craniata</taxon>
        <taxon>Vertebrata</taxon>
        <taxon>Euteleostomi</taxon>
        <taxon>Mammalia</taxon>
        <taxon>Eutheria</taxon>
        <taxon>Euarchontoglires</taxon>
        <taxon>Primates</taxon>
        <taxon>Haplorrhini</taxon>
        <taxon>Catarrhini</taxon>
        <taxon>Hominidae</taxon>
        <taxon>Homo</taxon>
    </lineage>
</organism>
<name>RIPR2_HUMAN</name>
<gene>
    <name type="primary">RIPOR2</name>
    <name type="synonym">C6orf32</name>
    <name type="synonym">DIFF48</name>
    <name type="synonym">FAM65B</name>
    <name type="synonym">KIAA0386</name>
    <name evidence="15" type="synonym">PL48</name>
</gene>
<protein>
    <recommendedName>
        <fullName>Rho family-interacting cell polarization regulator 2</fullName>
    </recommendedName>
</protein>
<feature type="chain" id="PRO_0000289114" description="Rho family-interacting cell polarization regulator 2">
    <location>
        <begin position="1"/>
        <end position="1068"/>
    </location>
</feature>
<feature type="region of interest" description="Disordered" evidence="4">
    <location>
        <begin position="45"/>
        <end position="73"/>
    </location>
</feature>
<feature type="region of interest" description="Involved in cell filopodia formation" evidence="5">
    <location>
        <begin position="55"/>
        <end position="113"/>
    </location>
</feature>
<feature type="region of interest" description="Disordered" evidence="4">
    <location>
        <begin position="474"/>
        <end position="524"/>
    </location>
</feature>
<feature type="coiled-coil region" evidence="3">
    <location>
        <begin position="83"/>
        <end position="112"/>
    </location>
</feature>
<feature type="coiled-coil region" evidence="3">
    <location>
        <begin position="768"/>
        <end position="793"/>
    </location>
</feature>
<feature type="compositionally biased region" description="Basic residues" evidence="4">
    <location>
        <begin position="48"/>
        <end position="59"/>
    </location>
</feature>
<feature type="compositionally biased region" description="Polar residues" evidence="4">
    <location>
        <begin position="474"/>
        <end position="491"/>
    </location>
</feature>
<feature type="compositionally biased region" description="Basic and acidic residues" evidence="4">
    <location>
        <begin position="494"/>
        <end position="510"/>
    </location>
</feature>
<feature type="modified residue" description="Phosphoserine; in isoform 2" evidence="9">
    <location>
        <position position="21"/>
    </location>
</feature>
<feature type="modified residue" description="Phosphoserine; in isoform 2" evidence="9">
    <location>
        <position position="37"/>
    </location>
</feature>
<feature type="modified residue" description="Phosphoserine; in isoform 2" evidence="9">
    <location>
        <position position="341"/>
    </location>
</feature>
<feature type="modified residue" description="Phosphoserine; in isoform 2" evidence="9">
    <location>
        <position position="523"/>
    </location>
</feature>
<feature type="modified residue" description="Phosphoserine" evidence="2">
    <location>
        <position position="573"/>
    </location>
</feature>
<feature type="modified residue" description="Phosphoserine; in isoform 2" evidence="9">
    <location>
        <position position="585"/>
    </location>
</feature>
<feature type="splice variant" id="VSP_025904" description="In isoform 2." evidence="14 15">
    <location>
        <begin position="360"/>
        <end position="409"/>
    </location>
</feature>
<feature type="splice variant" id="VSP_025905" description="In isoform 2." evidence="14 15">
    <original>C</original>
    <variation>K</variation>
    <location>
        <position position="641"/>
    </location>
</feature>
<feature type="splice variant" id="VSP_025906" description="In isoform 2." evidence="14 15">
    <location>
        <begin position="642"/>
        <end position="1068"/>
    </location>
</feature>
<feature type="sequence variant" id="VAR_032572" description="In dbSNP:rs11967003.">
    <original>A</original>
    <variation>G</variation>
    <location>
        <position position="145"/>
    </location>
</feature>
<feature type="sequence variant" id="VAR_032573" description="In dbSNP:rs35331811." evidence="13">
    <original>V</original>
    <variation>M</variation>
    <location>
        <position position="320"/>
    </location>
</feature>
<feature type="sequence variant" id="VAR_032574" description="In dbSNP:rs34016544.">
    <original>E</original>
    <variation>K</variation>
    <location>
        <position position="424"/>
    </location>
</feature>
<feature type="sequence variant" id="VAR_032575" description="In dbSNP:rs34298086.">
    <original>S</original>
    <variation>C</variation>
    <location>
        <position position="452"/>
    </location>
</feature>
<feature type="sequence variant" id="VAR_032576" description="In dbSNP:rs35514577.">
    <original>E</original>
    <variation>K</variation>
    <location>
        <position position="495"/>
    </location>
</feature>
<feature type="sequence variant" id="VAR_032577" description="In dbSNP:rs35780910.">
    <original>R</original>
    <variation>C</variation>
    <location>
        <position position="520"/>
    </location>
</feature>
<feature type="sequence variant" id="VAR_087100" description="In DFNA21; does not affect expression level; contrary to wild-type, does not rescue the morphological defects observed in hair cells of knockout mice, which include hair bundle polarity and cohesion and length of stereocilia; dbSNP:rs760676508." evidence="11">
    <location>
        <begin position="566"/>
        <end position="569"/>
    </location>
</feature>
<feature type="sequence variant" id="VAR_062193" description="In dbSNP:rs9461073." evidence="13">
    <original>R</original>
    <variation>Q</variation>
    <location>
        <position position="868"/>
    </location>
</feature>
<feature type="mutagenesis site" description="Reduces phosphorylation, interaction with HDAC6, YWHAB and 14-3-3 proteins, localization at the front of the neutrophil upon chemokine stimulation and prevents T cell proliferation inhibition; when associated with A-37; A-341; A-523 and A-585 (isoform 2)." evidence="9 10">
    <original>S</original>
    <variation>A</variation>
    <location>
        <position position="21"/>
    </location>
</feature>
<feature type="mutagenesis site" description="Reduces phosphorylation, interaction with HDAC6, YWHAB and 14-3-3 proteins, localization at the front of the neutrophil upon chemokine stimulation and prevents T cell proliferation inhibition; when associated with A-21; A-341; A-523 and A-585 (isoform 2)." evidence="9 10">
    <original>S</original>
    <variation>A</variation>
    <location>
        <position position="37"/>
    </location>
</feature>
<feature type="mutagenesis site" description="Inhibits interaction with RHOA and does not prevent T cell proliferation inhibition; in isoform 2." evidence="9 10">
    <original>RL</original>
    <variation>AA</variation>
    <location>
        <begin position="151"/>
        <end position="152"/>
    </location>
</feature>
<feature type="mutagenesis site" description="Inhibits interaction with RHOA; in isoform 2." evidence="9 10">
    <original>GA</original>
    <variation>RR</variation>
    <location>
        <begin position="155"/>
        <end position="156"/>
    </location>
</feature>
<feature type="mutagenesis site" description="Reduces phosphorylation, interaction with HDAC6, YWHAB and 14-3-3 proteins, localization at the front of the neutrophil upon chemokine stimulation and prevents T cell proliferation inhibition; when associated with A-21; A-37; A-523 and A-585 (isoform 2)." evidence="9 10">
    <original>S</original>
    <variation>A</variation>
    <location>
        <position position="341"/>
    </location>
</feature>
<feature type="mutagenesis site" description="Reduces phosphorylation, interaction with HDAC6, YWHAB and 14-3-3 proteins, localization at the front of the neutrophil upon chemokine stimulation and prevents T cell proliferation inhibition; when associated with A-21; A-37; A-341 and A-585 (isoform 2)." evidence="9 10">
    <original>S</original>
    <variation>A</variation>
    <location>
        <position position="523"/>
    </location>
</feature>
<feature type="mutagenesis site" description="Reduces phosphorylation, interaction with HDAC6, YWHAB and 14-3-3 proteins, localization at the front of the neutrophil upon chemokine stimulation and prevents T cell proliferation inhibition; when associated with A-21; A-37; A-341 and A-523 (isoform 2)." evidence="9 10">
    <original>S</original>
    <variation>A</variation>
    <location>
        <position position="585"/>
    </location>
</feature>
<feature type="sequence conflict" description="In Ref. 1; AAC51134." evidence="16" ref="1">
    <original>P</original>
    <variation>A</variation>
    <location>
        <position position="13"/>
    </location>
</feature>
<sequence length="1068" mass="118519">MLVGSQSFSPGGPNGIIRSQSFAGFSGLQERRSRCNSFIENSSALKKPQAKLKKMHNLGHKNNNPPKEPQPKRVEEVYRALKNGLDEYLEVHQTELDKLTAQLKDMKRNSRLGVLYDLDKQIKTIERYMRRLEFHISKVDELYEAYCIQRRLQDGASKMKQAFATSPASKAARESLTEINRSFKEYTENMCTIEVELENLLGEFSIKMKGLAGFARLCPGDQYEIFMKYGRQRWKLKGKIEVNGKQSWDGEETVFLPLIVGFISIKVTELKGLATHILVGSVTCETKELFAARPQVVAVDINDLGTIKLNLEITWYPFDVEDMTASSGAGNKAAALQRRMSMYSQGTPETPTFKDHSFFRWLHPSPDKPRRLSVLSALQDTFFAKLHRSRSFSDLPSLRPSPKAVLELYSNLPDDIFENGKAAEEKMPLSLSFSDLPNGDCALTSHSTGSPSNSTNPEITITPAEFNLSSLASQNEGMDDTSSASSRNSLGEGQEPKSHLKEEDPEEPRKPASAPSEACRRQSSGAGAEHLFLENDVAEALLQESEEASELKPVELDTSEGNITKQLVKRLTSAEVPMATDRLLSEGSVGGESEGCRSFLDGSLEDAFNGLLLALEPHKEQYKEFQDLNQEVMNLDDILKCKPAVSRSRSSSLSLTVESALESFDFLNTSDFDEEEDGDEVCNVGGGADSVFSDTETEKHSYRSVHPEARGHLSEALTEDTGVGTSVAGSPLPLTTGNESLDITIVRHLQYCTQLVQQIVFSSKTPFVARSLLEKLSRQIQVMEKLAAVSDENIGNISSVVEAIPEFHKKLSLLSFWTKCCSPVGVYHSPADRVMKQLEASFARTVNKEYPGLADPVFRTLVSQILDRAEPLLSSSLSSEVVTVFQYYSYFTSHGVSDLESYLSQLARQVSMVQTLQSLRDEKLLQTMSDLAPSNLLAQQEVLRTLALLLTREDNEVSEAVTLYLAAASKNQHFREKALLYYCEALTKTNLQLQKAACLALKILEATESIKMLVTLCQSDTEEIRNVASETLLSLGEDGRLAYEQLDKFPRDCVKVGGRHGTEVATAF</sequence>
<proteinExistence type="evidence at protein level"/>